<dbReference type="EMBL" id="AAFI02000149">
    <property type="protein sequence ID" value="EAL62494.1"/>
    <property type="molecule type" value="Genomic_DNA"/>
</dbReference>
<dbReference type="RefSeq" id="XP_636008.1">
    <property type="nucleotide sequence ID" value="XM_630916.1"/>
</dbReference>
<dbReference type="SMR" id="Q54GR1"/>
<dbReference type="FunCoup" id="Q54GR1">
    <property type="interactions" value="847"/>
</dbReference>
<dbReference type="STRING" id="44689.Q54GR1"/>
<dbReference type="PaxDb" id="44689-DDB0216146"/>
<dbReference type="EnsemblProtists" id="EAL62494">
    <property type="protein sequence ID" value="EAL62494"/>
    <property type="gene ID" value="DDB_G0289963"/>
</dbReference>
<dbReference type="GeneID" id="8627423"/>
<dbReference type="KEGG" id="ddi:DDB_G0289963"/>
<dbReference type="dictyBase" id="DDB_G0289963"/>
<dbReference type="VEuPathDB" id="AmoebaDB:DDB_G0289963"/>
<dbReference type="eggNOG" id="ENOG502R96Q">
    <property type="taxonomic scope" value="Eukaryota"/>
</dbReference>
<dbReference type="HOGENOM" id="CLU_517251_0_0_1"/>
<dbReference type="InParanoid" id="Q54GR1"/>
<dbReference type="OMA" id="MANDNRA"/>
<dbReference type="Reactome" id="R-DDI-72163">
    <property type="pathway name" value="mRNA Splicing - Major Pathway"/>
</dbReference>
<dbReference type="PRO" id="PR:Q54GR1"/>
<dbReference type="Proteomes" id="UP000002195">
    <property type="component" value="Chromosome 5"/>
</dbReference>
<dbReference type="GO" id="GO:0005634">
    <property type="term" value="C:nucleus"/>
    <property type="evidence" value="ECO:0000318"/>
    <property type="project" value="GO_Central"/>
</dbReference>
<dbReference type="InterPro" id="IPR018800">
    <property type="entry name" value="PRCC"/>
</dbReference>
<dbReference type="PANTHER" id="PTHR13621">
    <property type="entry name" value="PROLINE-RICH PROTEIN PRCC"/>
    <property type="match status" value="1"/>
</dbReference>
<dbReference type="PANTHER" id="PTHR13621:SF2">
    <property type="entry name" value="PROLINE-RICH PROTEIN PRCC"/>
    <property type="match status" value="1"/>
</dbReference>
<keyword id="KW-1185">Reference proteome</keyword>
<proteinExistence type="predicted"/>
<reference key="1">
    <citation type="journal article" date="2005" name="Nature">
        <title>The genome of the social amoeba Dictyostelium discoideum.</title>
        <authorList>
            <person name="Eichinger L."/>
            <person name="Pachebat J.A."/>
            <person name="Gloeckner G."/>
            <person name="Rajandream M.A."/>
            <person name="Sucgang R."/>
            <person name="Berriman M."/>
            <person name="Song J."/>
            <person name="Olsen R."/>
            <person name="Szafranski K."/>
            <person name="Xu Q."/>
            <person name="Tunggal B."/>
            <person name="Kummerfeld S."/>
            <person name="Madera M."/>
            <person name="Konfortov B.A."/>
            <person name="Rivero F."/>
            <person name="Bankier A.T."/>
            <person name="Lehmann R."/>
            <person name="Hamlin N."/>
            <person name="Davies R."/>
            <person name="Gaudet P."/>
            <person name="Fey P."/>
            <person name="Pilcher K."/>
            <person name="Chen G."/>
            <person name="Saunders D."/>
            <person name="Sodergren E.J."/>
            <person name="Davis P."/>
            <person name="Kerhornou A."/>
            <person name="Nie X."/>
            <person name="Hall N."/>
            <person name="Anjard C."/>
            <person name="Hemphill L."/>
            <person name="Bason N."/>
            <person name="Farbrother P."/>
            <person name="Desany B."/>
            <person name="Just E."/>
            <person name="Morio T."/>
            <person name="Rost R."/>
            <person name="Churcher C.M."/>
            <person name="Cooper J."/>
            <person name="Haydock S."/>
            <person name="van Driessche N."/>
            <person name="Cronin A."/>
            <person name="Goodhead I."/>
            <person name="Muzny D.M."/>
            <person name="Mourier T."/>
            <person name="Pain A."/>
            <person name="Lu M."/>
            <person name="Harper D."/>
            <person name="Lindsay R."/>
            <person name="Hauser H."/>
            <person name="James K.D."/>
            <person name="Quiles M."/>
            <person name="Madan Babu M."/>
            <person name="Saito T."/>
            <person name="Buchrieser C."/>
            <person name="Wardroper A."/>
            <person name="Felder M."/>
            <person name="Thangavelu M."/>
            <person name="Johnson D."/>
            <person name="Knights A."/>
            <person name="Loulseged H."/>
            <person name="Mungall K.L."/>
            <person name="Oliver K."/>
            <person name="Price C."/>
            <person name="Quail M.A."/>
            <person name="Urushihara H."/>
            <person name="Hernandez J."/>
            <person name="Rabbinowitsch E."/>
            <person name="Steffen D."/>
            <person name="Sanders M."/>
            <person name="Ma J."/>
            <person name="Kohara Y."/>
            <person name="Sharp S."/>
            <person name="Simmonds M.N."/>
            <person name="Spiegler S."/>
            <person name="Tivey A."/>
            <person name="Sugano S."/>
            <person name="White B."/>
            <person name="Walker D."/>
            <person name="Woodward J.R."/>
            <person name="Winckler T."/>
            <person name="Tanaka Y."/>
            <person name="Shaulsky G."/>
            <person name="Schleicher M."/>
            <person name="Weinstock G.M."/>
            <person name="Rosenthal A."/>
            <person name="Cox E.C."/>
            <person name="Chisholm R.L."/>
            <person name="Gibbs R.A."/>
            <person name="Loomis W.F."/>
            <person name="Platzer M."/>
            <person name="Kay R.R."/>
            <person name="Williams J.G."/>
            <person name="Dear P.H."/>
            <person name="Noegel A.A."/>
            <person name="Barrell B.G."/>
            <person name="Kuspa A."/>
        </authorList>
    </citation>
    <scope>NUCLEOTIDE SEQUENCE [LARGE SCALE GENOMIC DNA]</scope>
    <source>
        <strain>AX4</strain>
    </source>
</reference>
<gene>
    <name type="ORF">DDB_G0289963</name>
</gene>
<evidence type="ECO:0000256" key="1">
    <source>
        <dbReference type="SAM" id="MobiDB-lite"/>
    </source>
</evidence>
<sequence>MSSFLVAYDDESEEEDNNNNNNNNNNNNNNNIINNNNNNNNSNNQIKDEDNIYSYNNDTIISQSQVQPKTVTLGLNNKLNQKKIQQTQQIQEKDKLSSDFNFYNNNNNSNSNSNNDENDDFIYNSNNKKRNNIDNDAEEINEFRNPDLKNKPKSSHSLFSMLPTPKSSQNTTTTQQSSYSFPKPVNNNNNNNNNNNNNNNNNNNNNNNNNNNNNNNNNNSNNNDDEKDDDKSKKINENENTVNKKDNIENQNENQNEIENENENNNNEDTKKKINNSMIPGSLRKKLLKNQPKTKKSTTTTTTATTTTTTITSVKPITTEINNNNSNSNNLPSIPIGNEKSKINDNQDEEDENENDGLFFSFQQSSTNNKKPQQEEIDYSAYINNDDGDDDDDDDENENENDSQPEEEYEENKQQQQQEWTQEQIQQYWYMQQQEQQQQQQQQPFNLKSQQQYQHYHEYNNVGKIYEVNQSKMLEENNSFKILELRKTTQEQDRVLANIPKVSKSQRQKHTIGSLLGDYQTKKYKFE</sequence>
<protein>
    <recommendedName>
        <fullName>Putative uncharacterized protein DDB_G0289963</fullName>
    </recommendedName>
</protein>
<accession>Q54GR1</accession>
<feature type="chain" id="PRO_0000346932" description="Putative uncharacterized protein DDB_G0289963">
    <location>
        <begin position="1"/>
        <end position="527"/>
    </location>
</feature>
<feature type="region of interest" description="Disordered" evidence="1">
    <location>
        <begin position="1"/>
        <end position="49"/>
    </location>
</feature>
<feature type="region of interest" description="Disordered" evidence="1">
    <location>
        <begin position="99"/>
        <end position="307"/>
    </location>
</feature>
<feature type="region of interest" description="Disordered" evidence="1">
    <location>
        <begin position="319"/>
        <end position="353"/>
    </location>
</feature>
<feature type="region of interest" description="Disordered" evidence="1">
    <location>
        <begin position="382"/>
        <end position="419"/>
    </location>
</feature>
<feature type="compositionally biased region" description="Acidic residues" evidence="1">
    <location>
        <begin position="8"/>
        <end position="17"/>
    </location>
</feature>
<feature type="compositionally biased region" description="Low complexity" evidence="1">
    <location>
        <begin position="18"/>
        <end position="44"/>
    </location>
</feature>
<feature type="compositionally biased region" description="Low complexity" evidence="1">
    <location>
        <begin position="99"/>
        <end position="115"/>
    </location>
</feature>
<feature type="compositionally biased region" description="Basic and acidic residues" evidence="1">
    <location>
        <begin position="141"/>
        <end position="150"/>
    </location>
</feature>
<feature type="compositionally biased region" description="Low complexity" evidence="1">
    <location>
        <begin position="167"/>
        <end position="178"/>
    </location>
</feature>
<feature type="compositionally biased region" description="Low complexity" evidence="1">
    <location>
        <begin position="186"/>
        <end position="222"/>
    </location>
</feature>
<feature type="compositionally biased region" description="Basic and acidic residues" evidence="1">
    <location>
        <begin position="229"/>
        <end position="248"/>
    </location>
</feature>
<feature type="compositionally biased region" description="Basic residues" evidence="1">
    <location>
        <begin position="283"/>
        <end position="296"/>
    </location>
</feature>
<feature type="compositionally biased region" description="Low complexity" evidence="1">
    <location>
        <begin position="297"/>
        <end position="307"/>
    </location>
</feature>
<feature type="compositionally biased region" description="Low complexity" evidence="1">
    <location>
        <begin position="319"/>
        <end position="330"/>
    </location>
</feature>
<feature type="compositionally biased region" description="Acidic residues" evidence="1">
    <location>
        <begin position="386"/>
        <end position="410"/>
    </location>
</feature>
<organism>
    <name type="scientific">Dictyostelium discoideum</name>
    <name type="common">Social amoeba</name>
    <dbReference type="NCBI Taxonomy" id="44689"/>
    <lineage>
        <taxon>Eukaryota</taxon>
        <taxon>Amoebozoa</taxon>
        <taxon>Evosea</taxon>
        <taxon>Eumycetozoa</taxon>
        <taxon>Dictyostelia</taxon>
        <taxon>Dictyosteliales</taxon>
        <taxon>Dictyosteliaceae</taxon>
        <taxon>Dictyostelium</taxon>
    </lineage>
</organism>
<name>Y6146_DICDI</name>